<reference key="1">
    <citation type="journal article" date="1990" name="Plant Mol. Biol.">
        <title>Complete sequence of a cDNA of alpha subunit of soybean beta-conglycinin.</title>
        <authorList>
            <person name="Sebastiani F.L."/>
            <person name="Farrel L.B."/>
            <person name="Schuler M.A."/>
            <person name="Beachy R.N."/>
        </authorList>
    </citation>
    <scope>NUCLEOTIDE SEQUENCE [MRNA]</scope>
    <source>
        <tissue>Cotyledon</tissue>
    </source>
</reference>
<reference key="2">
    <citation type="journal article" date="2001" name="Genes Genet. Syst.">
        <title>Structure and characterization of the gene encoding alpha subunit of soybean beta-conglycinin.</title>
        <authorList>
            <person name="Yoshino M."/>
            <person name="Kanazawa A."/>
            <person name="Tsutsumi K.I."/>
            <person name="Nakamura I."/>
            <person name="Shimamoto Y."/>
        </authorList>
    </citation>
    <scope>NUCLEOTIDE SEQUENCE [MRNA]</scope>
</reference>
<reference key="3">
    <citation type="journal article" date="2002" name="Breed. Sci.">
        <title>Structural variation around the gene encoding the alpha subunit of soybean beta-conglycinin and correlation with the expression of the alpha subunit.</title>
        <authorList>
            <person name="Yoshino M."/>
            <person name="Kanazawa A."/>
            <person name="Tsutsumi K."/>
            <person name="Nakamura I."/>
            <person name="Takahashi K."/>
            <person name="Shimamoto Y."/>
        </authorList>
    </citation>
    <scope>NUCLEOTIDE SEQUENCE [MRNA]</scope>
</reference>
<reference key="4">
    <citation type="journal article" date="2006" name="Genes Genet. Syst.">
        <title>The regulatory function of the upstream sequence of the beta-conglycinin alpha subunit gene in seed-specific transcription is associated with the presence of the RY sequence.</title>
        <authorList>
            <person name="Yoshino M."/>
            <person name="Nagamatsu A."/>
            <person name="Tsutsumi K."/>
            <person name="Kanazawa A."/>
        </authorList>
    </citation>
    <scope>NUCLEOTIDE SEQUENCE [MRNA]</scope>
</reference>
<reference key="5">
    <citation type="journal article" date="2010" name="Nature">
        <title>Genome sequence of the palaeopolyploid soybean.</title>
        <authorList>
            <person name="Schmutz J."/>
            <person name="Cannon S.B."/>
            <person name="Schlueter J."/>
            <person name="Ma J."/>
            <person name="Mitros T."/>
            <person name="Nelson W."/>
            <person name="Hyten D.L."/>
            <person name="Song Q."/>
            <person name="Thelen J.J."/>
            <person name="Cheng J."/>
            <person name="Xu D."/>
            <person name="Hellsten U."/>
            <person name="May G.D."/>
            <person name="Yu Y."/>
            <person name="Sakurai T."/>
            <person name="Umezawa T."/>
            <person name="Bhattacharyya M.K."/>
            <person name="Sandhu D."/>
            <person name="Valliyodan B."/>
            <person name="Lindquist E."/>
            <person name="Peto M."/>
            <person name="Grant D."/>
            <person name="Shu S."/>
            <person name="Goodstein D."/>
            <person name="Barry K."/>
            <person name="Futrell-Griggs M."/>
            <person name="Abernathy B."/>
            <person name="Du J."/>
            <person name="Tian Z."/>
            <person name="Zhu L."/>
            <person name="Gill N."/>
            <person name="Joshi T."/>
            <person name="Libault M."/>
            <person name="Sethuraman A."/>
            <person name="Zhang X.-C."/>
            <person name="Shinozaki K."/>
            <person name="Nguyen H.T."/>
            <person name="Wing R.A."/>
            <person name="Cregan P."/>
            <person name="Specht J."/>
            <person name="Grimwood J."/>
            <person name="Rokhsar D."/>
            <person name="Stacey G."/>
            <person name="Shoemaker R.C."/>
            <person name="Jackson S.A."/>
        </authorList>
    </citation>
    <scope>NUCLEOTIDE SEQUENCE [LARGE SCALE GENOMIC DNA]</scope>
    <source>
        <strain>cv. Williams 82</strain>
    </source>
</reference>
<reference key="6">
    <citation type="journal article" date="1987" name="Phytochemistry">
        <title>Structural homology among the major 7s globulin subunits of soybean seed storage proteins.</title>
        <authorList>
            <person name="Hirano H."/>
            <person name="Kagawa H."/>
            <person name="Kamata Y."/>
            <person name="Yamauchi F."/>
        </authorList>
    </citation>
    <scope>PROTEIN SEQUENCE OF 63-75</scope>
    <source>
        <strain>cv. Raiden</strain>
    </source>
</reference>
<reference key="7">
    <citation type="journal article" date="2004" name="Plant J.">
        <title>The composition of newly synthesized proteins in the endoplasmic reticulum determines the transport pathways of soybean seed storage proteins.</title>
        <authorList>
            <person name="Mori T."/>
            <person name="Maruyama N."/>
            <person name="Nishizawa K."/>
            <person name="Higasa T."/>
            <person name="Yagasaki K."/>
            <person name="Ishimoto M."/>
            <person name="Utsumi S."/>
        </authorList>
    </citation>
    <scope>SUBUNIT</scope>
    <scope>SUBCELLULAR LOCATION</scope>
</reference>
<reference key="8">
    <citation type="journal article" date="2009" name="J. Allergy Clin. Immunol.">
        <title>Soybean (Glycine max) allergy in Europe: Gly m 5 (beta-conglycinin) and Gly m 6 (glycinin) are potential diagnostic markers for severe allergic reactions to soy.</title>
        <authorList>
            <person name="Holzhauser T."/>
            <person name="Wackermann O."/>
            <person name="Ballmer-Weber B.K."/>
            <person name="Bindslev-Jensen C."/>
            <person name="Scibilia J."/>
            <person name="Perono-Garoffo L."/>
            <person name="Utsumi S."/>
            <person name="Poulsen L.K."/>
            <person name="Vieths S."/>
        </authorList>
    </citation>
    <scope>ALLERGEN</scope>
</reference>
<reference key="9">
    <citation type="journal article" date="2012" name="Plant Physiol.">
        <title>Accumulation of beta-conglycinin in soybean cotyledon through the formation of disulfide bonds between alpha'- and alpha-subunits.</title>
        <authorList>
            <person name="Wadahama H."/>
            <person name="Iwasaki K."/>
            <person name="Matsusaki M."/>
            <person name="Nishizawa K."/>
            <person name="Ishimoto M."/>
            <person name="Arisaka F."/>
            <person name="Takagi K."/>
            <person name="Urade R."/>
        </authorList>
    </citation>
    <scope>DISULFIDE BOND</scope>
</reference>
<accession>P0DO16</accession>
<accession>P13916</accession>
<accession>Q94LX2</accession>
<sequence>MMRARFPLLLLGLVFLASVSVSFGIAYWEKENPKHNKCLQSCNSERDSYRNQACHARCNLLKVEKEECEEGEIPRPRPRPQHPEREPQQPGEKEEDEDEQPRPIPFPRPQPRQEEEHEQREEQEWPRKEEKRGEKGSEEEDEDEDEEQDERQFPFPRPPHQKEERKQEEDEDEEQQRESEESEDSELRRHKNKNPFLFGSNRFETLFKNQYGRIRVLQRFNQRSPQLQNLRDYRILEFNSKPNTLLLPNHADADYLIVILNGTAILSLVNNDDRDSYRLQSGDALRVPSGTTYYVVNPDNNENLRLITLAIPVNKPGRFESFFLSSTEAQQSYLQGFSRNILEASYDTKFEEINKVLFSREEGQQQGEQRLQESVIVEISKEQIRALSKRAKSSSRKTISSEDKPFNLRSRDPIYSNKLGKFFEITPEKNPQLRDLDIFLSIVDMNEGALLLPHFNSKAIVILVINEGDANIELVGLKEQQQEQQQEEQPLEVRKYRAELSEQDIFVIPAGYPVVVNATSNLNFFAIGINAENNQRNFLAGSQDNVISQIPSQVQELAFPGSAQAVEKLLKNQRESYFVDAQPKKKEEGNKGRKGPLSSILRAFY</sequence>
<organism>
    <name type="scientific">Glycine max</name>
    <name type="common">Soybean</name>
    <name type="synonym">Glycine hispida</name>
    <dbReference type="NCBI Taxonomy" id="3847"/>
    <lineage>
        <taxon>Eukaryota</taxon>
        <taxon>Viridiplantae</taxon>
        <taxon>Streptophyta</taxon>
        <taxon>Embryophyta</taxon>
        <taxon>Tracheophyta</taxon>
        <taxon>Spermatophyta</taxon>
        <taxon>Magnoliopsida</taxon>
        <taxon>eudicotyledons</taxon>
        <taxon>Gunneridae</taxon>
        <taxon>Pentapetalae</taxon>
        <taxon>rosids</taxon>
        <taxon>fabids</taxon>
        <taxon>Fabales</taxon>
        <taxon>Fabaceae</taxon>
        <taxon>Papilionoideae</taxon>
        <taxon>50 kb inversion clade</taxon>
        <taxon>NPAAA clade</taxon>
        <taxon>indigoferoid/millettioid clade</taxon>
        <taxon>Phaseoleae</taxon>
        <taxon>Glycine</taxon>
        <taxon>Glycine subgen. Soja</taxon>
    </lineage>
</organism>
<keyword id="KW-0020">Allergen</keyword>
<keyword id="KW-0903">Direct protein sequencing</keyword>
<keyword id="KW-1015">Disulfide bond</keyword>
<keyword id="KW-0256">Endoplasmic reticulum</keyword>
<keyword id="KW-0325">Glycoprotein</keyword>
<keyword id="KW-1185">Reference proteome</keyword>
<keyword id="KW-0708">Seed storage protein</keyword>
<keyword id="KW-0732">Signal</keyword>
<keyword id="KW-0758">Storage protein</keyword>
<keyword id="KW-0926">Vacuole</keyword>
<protein>
    <recommendedName>
        <fullName evidence="8">Beta-conglycinin alpha subunit 1</fullName>
        <shortName evidence="8">CG-alpha-1</shortName>
    </recommendedName>
    <alternativeName>
        <fullName evidence="7">Beta-conglycinin alpha subunit</fullName>
    </alternativeName>
    <allergenName evidence="8">Gly m 5</allergenName>
</protein>
<evidence type="ECO:0000255" key="1"/>
<evidence type="ECO:0000255" key="2">
    <source>
        <dbReference type="PROSITE-ProRule" id="PRU00498"/>
    </source>
</evidence>
<evidence type="ECO:0000256" key="3">
    <source>
        <dbReference type="SAM" id="MobiDB-lite"/>
    </source>
</evidence>
<evidence type="ECO:0000269" key="4">
    <source>
    </source>
</evidence>
<evidence type="ECO:0000269" key="5">
    <source>
    </source>
</evidence>
<evidence type="ECO:0000269" key="6">
    <source ref="6"/>
</evidence>
<evidence type="ECO:0000303" key="7">
    <source ref="3"/>
</evidence>
<evidence type="ECO:0000305" key="8"/>
<evidence type="ECO:0000305" key="9">
    <source>
    </source>
</evidence>
<evidence type="ECO:0000305" key="10">
    <source>
    </source>
</evidence>
<evidence type="ECO:0000305" key="11">
    <source ref="6"/>
</evidence>
<evidence type="ECO:0000312" key="12">
    <source>
        <dbReference type="EMBL" id="KRG91330.1"/>
    </source>
</evidence>
<proteinExistence type="evidence at protein level"/>
<feature type="signal peptide" evidence="1">
    <location>
        <begin position="1"/>
        <end position="22"/>
    </location>
</feature>
<feature type="propeptide" id="PRO_0000032186" evidence="11">
    <location>
        <begin position="23"/>
        <end position="62"/>
    </location>
</feature>
<feature type="chain" id="PRO_0000032187" description="Beta-conglycinin alpha subunit 1" evidence="6">
    <location>
        <begin position="63"/>
        <end position="605"/>
    </location>
</feature>
<feature type="domain" description="Cupin type-1 1" evidence="1">
    <location>
        <begin position="196"/>
        <end position="354"/>
    </location>
</feature>
<feature type="domain" description="Cupin type-1 2" evidence="1">
    <location>
        <begin position="406"/>
        <end position="567"/>
    </location>
</feature>
<feature type="region of interest" description="Disordered" evidence="3">
    <location>
        <begin position="65"/>
        <end position="195"/>
    </location>
</feature>
<feature type="compositionally biased region" description="Basic and acidic residues" evidence="3">
    <location>
        <begin position="111"/>
        <end position="136"/>
    </location>
</feature>
<feature type="compositionally biased region" description="Acidic residues" evidence="3">
    <location>
        <begin position="137"/>
        <end position="149"/>
    </location>
</feature>
<feature type="compositionally biased region" description="Acidic residues" evidence="3">
    <location>
        <begin position="169"/>
        <end position="184"/>
    </location>
</feature>
<feature type="glycosylation site" description="N-linked (GlcNAc...) asparagine" evidence="2">
    <location>
        <position position="261"/>
    </location>
</feature>
<feature type="glycosylation site" description="N-linked (GlcNAc...) asparagine" evidence="2">
    <location>
        <position position="517"/>
    </location>
</feature>
<feature type="disulfide bond" description="Interchain (with C-69 in alpha' subunit)" evidence="10">
    <location>
        <position position="68"/>
    </location>
</feature>
<feature type="sequence conflict" description="In Ref. 1; CAA35691." evidence="8" ref="1">
    <original>KQ</original>
    <variation>NE</variation>
    <location>
        <begin position="166"/>
        <end position="167"/>
    </location>
</feature>
<comment type="function">
    <text evidence="8">Seed storage protein. Accumulates during seed development and is hydrolyzed after germination to provide a carbon and nitrogen source for the developing seedling.</text>
</comment>
<comment type="subunit">
    <text evidence="9">The alpha-, alpha'-, and beta-subunits associate in various combinations to form trimeric proteins.</text>
</comment>
<comment type="subcellular location">
    <subcellularLocation>
        <location evidence="8">Vacuole</location>
        <location evidence="8">Aleurone grain</location>
    </subcellularLocation>
    <subcellularLocation>
        <location evidence="4">Endoplasmic reticulum</location>
    </subcellularLocation>
    <subcellularLocation>
        <location>Protein storage vacuole</location>
    </subcellularLocation>
    <text evidence="4">Localizes in protein storage vacuoles in cotyledons of developing and mature beans (PubMed:15447650). Synthesized and assembled into trimers in the endoplasmic reticulum, and transported to the protein storage vacuoles by the dense vesicles (PubMed:15447650).</text>
</comment>
<comment type="allergen">
    <text evidence="5">Causes an allergic reaction in human (PubMed:18996574). Binds to IgE of patients with severe allergic reactions (anaphylaxis) to soybean (PubMed:18996574).</text>
</comment>
<comment type="similarity">
    <text evidence="8">Belongs to the 7S seed storage protein family.</text>
</comment>
<name>GLCA1_SOYBN</name>
<gene>
    <name evidence="7" type="primary">CG-3</name>
    <name evidence="12" type="ORF">GLYMA_20G148300</name>
</gene>
<dbReference type="EMBL" id="X17698">
    <property type="protein sequence ID" value="CAA35691.1"/>
    <property type="molecule type" value="mRNA"/>
</dbReference>
<dbReference type="EMBL" id="AB051865">
    <property type="protein sequence ID" value="BAB56161.1"/>
    <property type="molecule type" value="Genomic_DNA"/>
</dbReference>
<dbReference type="EMBL" id="AB237643">
    <property type="protein sequence ID" value="BAE46788.1"/>
    <property type="molecule type" value="Genomic_DNA"/>
</dbReference>
<dbReference type="EMBL" id="CM000853">
    <property type="protein sequence ID" value="KRG91330.1"/>
    <property type="molecule type" value="Genomic_DNA"/>
</dbReference>
<dbReference type="EMBL" id="ACUP02012676">
    <property type="status" value="NOT_ANNOTATED_CDS"/>
    <property type="molecule type" value="Genomic_DNA"/>
</dbReference>
<dbReference type="PIR" id="S14681">
    <property type="entry name" value="FWSYBA"/>
</dbReference>
<dbReference type="RefSeq" id="NP_001236856.2">
    <property type="nucleotide sequence ID" value="NM_001249927.2"/>
</dbReference>
<dbReference type="SMR" id="P0DO16"/>
<dbReference type="FunCoup" id="P0DO16">
    <property type="interactions" value="384"/>
</dbReference>
<dbReference type="STRING" id="3847.P0DO16"/>
<dbReference type="GlyCosmos" id="P0DO16">
    <property type="glycosylation" value="2 sites, No reported glycans"/>
</dbReference>
<dbReference type="PaxDb" id="3847-GLYMA20G28650.1"/>
<dbReference type="EnsemblPlants" id="KRG91330">
    <property type="protein sequence ID" value="KRG91330"/>
    <property type="gene ID" value="GLYMA_20G148300"/>
</dbReference>
<dbReference type="EnsemblPlants" id="KRG91332">
    <property type="protein sequence ID" value="KRG91332"/>
    <property type="gene ID" value="GLYMA_20G148400"/>
</dbReference>
<dbReference type="GeneID" id="547464"/>
<dbReference type="Gramene" id="KRG91330">
    <property type="protein sequence ID" value="KRG91330"/>
    <property type="gene ID" value="GLYMA_20G148300"/>
</dbReference>
<dbReference type="Gramene" id="KRG91332">
    <property type="protein sequence ID" value="KRG91332"/>
    <property type="gene ID" value="GLYMA_20G148400"/>
</dbReference>
<dbReference type="InParanoid" id="P0DO16"/>
<dbReference type="OMA" id="ENPWRRE"/>
<dbReference type="OrthoDB" id="1425232at2759"/>
<dbReference type="Proteomes" id="UP000008827">
    <property type="component" value="Chromosome 20"/>
</dbReference>
<dbReference type="GO" id="GO:0033095">
    <property type="term" value="C:aleurone grain"/>
    <property type="evidence" value="ECO:0007669"/>
    <property type="project" value="UniProtKB-SubCell"/>
</dbReference>
<dbReference type="GO" id="GO:0005783">
    <property type="term" value="C:endoplasmic reticulum"/>
    <property type="evidence" value="ECO:0000314"/>
    <property type="project" value="UniProtKB"/>
</dbReference>
<dbReference type="GO" id="GO:0000326">
    <property type="term" value="C:protein storage vacuole"/>
    <property type="evidence" value="ECO:0000314"/>
    <property type="project" value="UniProtKB"/>
</dbReference>
<dbReference type="GO" id="GO:0045735">
    <property type="term" value="F:nutrient reservoir activity"/>
    <property type="evidence" value="ECO:0007669"/>
    <property type="project" value="UniProtKB-KW"/>
</dbReference>
<dbReference type="CDD" id="cd02245">
    <property type="entry name" value="cupin_7S_vicilin-like_C"/>
    <property type="match status" value="1"/>
</dbReference>
<dbReference type="CDD" id="cd02244">
    <property type="entry name" value="cupin_7S_vicilin-like_N"/>
    <property type="match status" value="1"/>
</dbReference>
<dbReference type="FunFam" id="2.60.120.10:FF:000162">
    <property type="entry name" value="Beta-conglycinin beta subunit 1"/>
    <property type="match status" value="1"/>
</dbReference>
<dbReference type="FunFam" id="2.60.120.10:FF:000181">
    <property type="entry name" value="Beta-conglycinin beta subunit 1"/>
    <property type="match status" value="1"/>
</dbReference>
<dbReference type="Gene3D" id="2.60.120.10">
    <property type="entry name" value="Jelly Rolls"/>
    <property type="match status" value="2"/>
</dbReference>
<dbReference type="InterPro" id="IPR006045">
    <property type="entry name" value="Cupin_1"/>
</dbReference>
<dbReference type="InterPro" id="IPR014710">
    <property type="entry name" value="RmlC-like_jellyroll"/>
</dbReference>
<dbReference type="InterPro" id="IPR011051">
    <property type="entry name" value="RmlC_Cupin_sf"/>
</dbReference>
<dbReference type="InterPro" id="IPR050253">
    <property type="entry name" value="Seed_Storage-Functional"/>
</dbReference>
<dbReference type="PANTHER" id="PTHR31189">
    <property type="entry name" value="OS03G0336100 PROTEIN-RELATED"/>
    <property type="match status" value="1"/>
</dbReference>
<dbReference type="PANTHER" id="PTHR31189:SF41">
    <property type="entry name" value="VICILIN C72"/>
    <property type="match status" value="1"/>
</dbReference>
<dbReference type="Pfam" id="PF00190">
    <property type="entry name" value="Cupin_1"/>
    <property type="match status" value="1"/>
</dbReference>
<dbReference type="SMART" id="SM00835">
    <property type="entry name" value="Cupin_1"/>
    <property type="match status" value="2"/>
</dbReference>
<dbReference type="SUPFAM" id="SSF51182">
    <property type="entry name" value="RmlC-like cupins"/>
    <property type="match status" value="2"/>
</dbReference>